<reference key="1">
    <citation type="submission" date="2006-06" db="EMBL/GenBank/DDBJ databases">
        <title>Complete sequence of Rubrobacter xylanophilus DSM 9941.</title>
        <authorList>
            <consortium name="US DOE Joint Genome Institute"/>
            <person name="Copeland A."/>
            <person name="Lucas S."/>
            <person name="Lapidus A."/>
            <person name="Barry K."/>
            <person name="Detter J.C."/>
            <person name="Glavina del Rio T."/>
            <person name="Hammon N."/>
            <person name="Israni S."/>
            <person name="Dalin E."/>
            <person name="Tice H."/>
            <person name="Pitluck S."/>
            <person name="Munk A.C."/>
            <person name="Brettin T."/>
            <person name="Bruce D."/>
            <person name="Han C."/>
            <person name="Tapia R."/>
            <person name="Gilna P."/>
            <person name="Schmutz J."/>
            <person name="Larimer F."/>
            <person name="Land M."/>
            <person name="Hauser L."/>
            <person name="Kyrpides N."/>
            <person name="Lykidis A."/>
            <person name="da Costa M.S."/>
            <person name="Rainey F.A."/>
            <person name="Empadinhas N."/>
            <person name="Jolivet E."/>
            <person name="Battista J.R."/>
            <person name="Richardson P."/>
        </authorList>
    </citation>
    <scope>NUCLEOTIDE SEQUENCE [LARGE SCALE GENOMIC DNA]</scope>
    <source>
        <strain>DSM 9941 / JCM 11954 / NBRC 16129 / PRD-1</strain>
    </source>
</reference>
<accession>Q1AW65</accession>
<protein>
    <recommendedName>
        <fullName evidence="1">Ribosome-recycling factor</fullName>
        <shortName evidence="1">RRF</shortName>
    </recommendedName>
    <alternativeName>
        <fullName evidence="1">Ribosome-releasing factor</fullName>
    </alternativeName>
</protein>
<dbReference type="EMBL" id="CP000386">
    <property type="protein sequence ID" value="ABG04363.1"/>
    <property type="molecule type" value="Genomic_DNA"/>
</dbReference>
<dbReference type="RefSeq" id="WP_011564380.1">
    <property type="nucleotide sequence ID" value="NC_008148.1"/>
</dbReference>
<dbReference type="SMR" id="Q1AW65"/>
<dbReference type="STRING" id="266117.Rxyl_1401"/>
<dbReference type="KEGG" id="rxy:Rxyl_1401"/>
<dbReference type="eggNOG" id="COG0233">
    <property type="taxonomic scope" value="Bacteria"/>
</dbReference>
<dbReference type="HOGENOM" id="CLU_073981_2_0_11"/>
<dbReference type="OrthoDB" id="9804006at2"/>
<dbReference type="PhylomeDB" id="Q1AW65"/>
<dbReference type="Proteomes" id="UP000006637">
    <property type="component" value="Chromosome"/>
</dbReference>
<dbReference type="GO" id="GO:0005737">
    <property type="term" value="C:cytoplasm"/>
    <property type="evidence" value="ECO:0007669"/>
    <property type="project" value="UniProtKB-SubCell"/>
</dbReference>
<dbReference type="GO" id="GO:0043023">
    <property type="term" value="F:ribosomal large subunit binding"/>
    <property type="evidence" value="ECO:0007669"/>
    <property type="project" value="TreeGrafter"/>
</dbReference>
<dbReference type="GO" id="GO:0006415">
    <property type="term" value="P:translational termination"/>
    <property type="evidence" value="ECO:0007669"/>
    <property type="project" value="UniProtKB-UniRule"/>
</dbReference>
<dbReference type="CDD" id="cd00520">
    <property type="entry name" value="RRF"/>
    <property type="match status" value="1"/>
</dbReference>
<dbReference type="FunFam" id="1.10.132.20:FF:000001">
    <property type="entry name" value="Ribosome-recycling factor"/>
    <property type="match status" value="1"/>
</dbReference>
<dbReference type="FunFam" id="3.30.1360.40:FF:000001">
    <property type="entry name" value="Ribosome-recycling factor"/>
    <property type="match status" value="1"/>
</dbReference>
<dbReference type="Gene3D" id="3.30.1360.40">
    <property type="match status" value="1"/>
</dbReference>
<dbReference type="Gene3D" id="1.10.132.20">
    <property type="entry name" value="Ribosome-recycling factor"/>
    <property type="match status" value="1"/>
</dbReference>
<dbReference type="HAMAP" id="MF_00040">
    <property type="entry name" value="RRF"/>
    <property type="match status" value="1"/>
</dbReference>
<dbReference type="InterPro" id="IPR002661">
    <property type="entry name" value="Ribosome_recyc_fac"/>
</dbReference>
<dbReference type="InterPro" id="IPR023584">
    <property type="entry name" value="Ribosome_recyc_fac_dom"/>
</dbReference>
<dbReference type="InterPro" id="IPR036191">
    <property type="entry name" value="RRF_sf"/>
</dbReference>
<dbReference type="NCBIfam" id="TIGR00496">
    <property type="entry name" value="frr"/>
    <property type="match status" value="1"/>
</dbReference>
<dbReference type="PANTHER" id="PTHR20982:SF3">
    <property type="entry name" value="MITOCHONDRIAL RIBOSOME RECYCLING FACTOR PSEUDO 1"/>
    <property type="match status" value="1"/>
</dbReference>
<dbReference type="PANTHER" id="PTHR20982">
    <property type="entry name" value="RIBOSOME RECYCLING FACTOR"/>
    <property type="match status" value="1"/>
</dbReference>
<dbReference type="Pfam" id="PF01765">
    <property type="entry name" value="RRF"/>
    <property type="match status" value="1"/>
</dbReference>
<dbReference type="SUPFAM" id="SSF55194">
    <property type="entry name" value="Ribosome recycling factor, RRF"/>
    <property type="match status" value="1"/>
</dbReference>
<keyword id="KW-0963">Cytoplasm</keyword>
<keyword id="KW-0648">Protein biosynthesis</keyword>
<keyword id="KW-1185">Reference proteome</keyword>
<feature type="chain" id="PRO_1000057295" description="Ribosome-recycling factor">
    <location>
        <begin position="1"/>
        <end position="186"/>
    </location>
</feature>
<proteinExistence type="inferred from homology"/>
<name>RRF_RUBXD</name>
<comment type="function">
    <text evidence="1">Responsible for the release of ribosomes from messenger RNA at the termination of protein biosynthesis. May increase the efficiency of translation by recycling ribosomes from one round of translation to another.</text>
</comment>
<comment type="subcellular location">
    <subcellularLocation>
        <location evidence="1">Cytoplasm</location>
    </subcellularLocation>
</comment>
<comment type="similarity">
    <text evidence="1">Belongs to the RRF family.</text>
</comment>
<evidence type="ECO:0000255" key="1">
    <source>
        <dbReference type="HAMAP-Rule" id="MF_00040"/>
    </source>
</evidence>
<sequence length="186" mass="21414">MSDVIDLSDAERRMKGALEAVRHQFATIRTGRANPALLDRIEVEAYGTRMPIKSVASIGAPEPRLLTITPYDPNLLKTIERAIRDSDLGLNPQNDGKIIRLPIPELTEERRRELIRLVRHMAEEGRVSVRNVRRDEMHDIQRLRREGEISEDDERRAEAELQKLTDAYIKRIDEALAEKEAELMEV</sequence>
<organism>
    <name type="scientific">Rubrobacter xylanophilus (strain DSM 9941 / JCM 11954 / NBRC 16129 / PRD-1)</name>
    <dbReference type="NCBI Taxonomy" id="266117"/>
    <lineage>
        <taxon>Bacteria</taxon>
        <taxon>Bacillati</taxon>
        <taxon>Actinomycetota</taxon>
        <taxon>Rubrobacteria</taxon>
        <taxon>Rubrobacterales</taxon>
        <taxon>Rubrobacteraceae</taxon>
        <taxon>Rubrobacter</taxon>
    </lineage>
</organism>
<gene>
    <name evidence="1" type="primary">frr</name>
    <name type="ordered locus">Rxyl_1401</name>
</gene>